<dbReference type="EMBL" id="U00016">
    <property type="protein sequence ID" value="AAA17178.1"/>
    <property type="status" value="ALT_INIT"/>
    <property type="molecule type" value="Genomic_DNA"/>
</dbReference>
<dbReference type="EMBL" id="AL583919">
    <property type="protein sequence ID" value="CAC30128.1"/>
    <property type="molecule type" value="Genomic_DNA"/>
</dbReference>
<dbReference type="PIR" id="D86986">
    <property type="entry name" value="D86986"/>
</dbReference>
<dbReference type="PIR" id="S72610">
    <property type="entry name" value="S72610"/>
</dbReference>
<dbReference type="RefSeq" id="NP_301516.1">
    <property type="nucleotide sequence ID" value="NC_002677.1"/>
</dbReference>
<dbReference type="RefSeq" id="WP_010907840.1">
    <property type="nucleotide sequence ID" value="NC_002677.1"/>
</dbReference>
<dbReference type="SMR" id="Q49771"/>
<dbReference type="KEGG" id="mle:ML0620"/>
<dbReference type="PATRIC" id="fig|272631.5.peg.1098"/>
<dbReference type="Leproma" id="ML0620"/>
<dbReference type="eggNOG" id="ENOG5030PBH">
    <property type="taxonomic scope" value="Bacteria"/>
</dbReference>
<dbReference type="HOGENOM" id="CLU_129262_0_0_11"/>
<dbReference type="OrthoDB" id="4752056at2"/>
<dbReference type="Proteomes" id="UP000000806">
    <property type="component" value="Chromosome"/>
</dbReference>
<dbReference type="GO" id="GO:0005576">
    <property type="term" value="C:extracellular region"/>
    <property type="evidence" value="ECO:0007669"/>
    <property type="project" value="UniProtKB-SubCell"/>
</dbReference>
<comment type="subcellular location">
    <subcellularLocation>
        <location evidence="1">Secreted</location>
    </subcellularLocation>
</comment>
<comment type="similarity">
    <text evidence="3">Belongs to the MTB12 family.</text>
</comment>
<comment type="sequence caution" evidence="3">
    <conflict type="erroneous initiation">
        <sequence resource="EMBL-CDS" id="AAA17178"/>
    </conflict>
</comment>
<organism>
    <name type="scientific">Mycobacterium leprae (strain TN)</name>
    <dbReference type="NCBI Taxonomy" id="272631"/>
    <lineage>
        <taxon>Bacteria</taxon>
        <taxon>Bacillati</taxon>
        <taxon>Actinomycetota</taxon>
        <taxon>Actinomycetes</taxon>
        <taxon>Mycobacteriales</taxon>
        <taxon>Mycobacteriaceae</taxon>
        <taxon>Mycobacterium</taxon>
    </lineage>
</organism>
<keyword id="KW-1185">Reference proteome</keyword>
<keyword id="KW-0964">Secreted</keyword>
<keyword id="KW-0732">Signal</keyword>
<sequence>MTMKSIATYAALAIIGAAVDGLTSMAIPTGPAASHIQPVAFGVPLPQDPAPAADVPTAAELTSLLNKIVDPDVSFMHKSQLVEGGIGSAEAHIGDRELKNAAQKGELPLLFSVTNIRPGTSGSATADVSVSGPKLNPPVTQNITFINKGSWVLSRHSAMELLQAAGR</sequence>
<protein>
    <recommendedName>
        <fullName>Low molecular weight antigen MTB12 homolog</fullName>
    </recommendedName>
</protein>
<accession>Q49771</accession>
<proteinExistence type="inferred from homology"/>
<feature type="signal peptide" evidence="2">
    <location>
        <begin position="1"/>
        <end position="21"/>
    </location>
</feature>
<feature type="chain" id="PRO_0000021776" description="Low molecular weight antigen MTB12 homolog">
    <location>
        <begin position="22"/>
        <end position="167"/>
    </location>
</feature>
<name>MTB12_MYCLE</name>
<evidence type="ECO:0000250" key="1"/>
<evidence type="ECO:0000255" key="2"/>
<evidence type="ECO:0000305" key="3"/>
<reference key="1">
    <citation type="submission" date="1994-03" db="EMBL/GenBank/DDBJ databases">
        <authorList>
            <person name="Smith D.R."/>
            <person name="Robison K."/>
        </authorList>
    </citation>
    <scope>NUCLEOTIDE SEQUENCE [GENOMIC DNA]</scope>
</reference>
<reference key="2">
    <citation type="journal article" date="2001" name="Nature">
        <title>Massive gene decay in the leprosy bacillus.</title>
        <authorList>
            <person name="Cole S.T."/>
            <person name="Eiglmeier K."/>
            <person name="Parkhill J."/>
            <person name="James K.D."/>
            <person name="Thomson N.R."/>
            <person name="Wheeler P.R."/>
            <person name="Honore N."/>
            <person name="Garnier T."/>
            <person name="Churcher C.M."/>
            <person name="Harris D.E."/>
            <person name="Mungall K.L."/>
            <person name="Basham D."/>
            <person name="Brown D."/>
            <person name="Chillingworth T."/>
            <person name="Connor R."/>
            <person name="Davies R.M."/>
            <person name="Devlin K."/>
            <person name="Duthoy S."/>
            <person name="Feltwell T."/>
            <person name="Fraser A."/>
            <person name="Hamlin N."/>
            <person name="Holroyd S."/>
            <person name="Hornsby T."/>
            <person name="Jagels K."/>
            <person name="Lacroix C."/>
            <person name="Maclean J."/>
            <person name="Moule S."/>
            <person name="Murphy L.D."/>
            <person name="Oliver K."/>
            <person name="Quail M.A."/>
            <person name="Rajandream M.A."/>
            <person name="Rutherford K.M."/>
            <person name="Rutter S."/>
            <person name="Seeger K."/>
            <person name="Simon S."/>
            <person name="Simmonds M."/>
            <person name="Skelton J."/>
            <person name="Squares R."/>
            <person name="Squares S."/>
            <person name="Stevens K."/>
            <person name="Taylor K."/>
            <person name="Whitehead S."/>
            <person name="Woodward J.R."/>
            <person name="Barrell B.G."/>
        </authorList>
    </citation>
    <scope>NUCLEOTIDE SEQUENCE [LARGE SCALE GENOMIC DNA]</scope>
    <source>
        <strain>TN</strain>
    </source>
</reference>
<gene>
    <name type="primary">mtb12</name>
    <name type="ordered locus">ML0620</name>
    <name type="ORF">B1937_F3_91</name>
</gene>